<accession>Q0SRP8</accession>
<feature type="chain" id="PRO_1000006666" description="Aspartate--tRNA ligase">
    <location>
        <begin position="1"/>
        <end position="597"/>
    </location>
</feature>
<feature type="region of interest" description="Aspartate" evidence="1">
    <location>
        <begin position="204"/>
        <end position="207"/>
    </location>
</feature>
<feature type="binding site" evidence="1">
    <location>
        <position position="180"/>
    </location>
    <ligand>
        <name>L-aspartate</name>
        <dbReference type="ChEBI" id="CHEBI:29991"/>
    </ligand>
</feature>
<feature type="binding site" evidence="1">
    <location>
        <begin position="226"/>
        <end position="228"/>
    </location>
    <ligand>
        <name>ATP</name>
        <dbReference type="ChEBI" id="CHEBI:30616"/>
    </ligand>
</feature>
<feature type="binding site" evidence="1">
    <location>
        <position position="226"/>
    </location>
    <ligand>
        <name>L-aspartate</name>
        <dbReference type="ChEBI" id="CHEBI:29991"/>
    </ligand>
</feature>
<feature type="binding site" evidence="1">
    <location>
        <position position="235"/>
    </location>
    <ligand>
        <name>ATP</name>
        <dbReference type="ChEBI" id="CHEBI:30616"/>
    </ligand>
</feature>
<feature type="binding site" evidence="1">
    <location>
        <position position="454"/>
    </location>
    <ligand>
        <name>L-aspartate</name>
        <dbReference type="ChEBI" id="CHEBI:29991"/>
    </ligand>
</feature>
<feature type="binding site" evidence="1">
    <location>
        <position position="488"/>
    </location>
    <ligand>
        <name>ATP</name>
        <dbReference type="ChEBI" id="CHEBI:30616"/>
    </ligand>
</feature>
<feature type="binding site" evidence="1">
    <location>
        <position position="495"/>
    </location>
    <ligand>
        <name>L-aspartate</name>
        <dbReference type="ChEBI" id="CHEBI:29991"/>
    </ligand>
</feature>
<feature type="binding site" evidence="1">
    <location>
        <begin position="540"/>
        <end position="543"/>
    </location>
    <ligand>
        <name>ATP</name>
        <dbReference type="ChEBI" id="CHEBI:30616"/>
    </ligand>
</feature>
<dbReference type="EC" id="6.1.1.12" evidence="1"/>
<dbReference type="EMBL" id="CP000312">
    <property type="protein sequence ID" value="ABG85556.1"/>
    <property type="molecule type" value="Genomic_DNA"/>
</dbReference>
<dbReference type="RefSeq" id="WP_011592777.1">
    <property type="nucleotide sequence ID" value="NC_008262.1"/>
</dbReference>
<dbReference type="SMR" id="Q0SRP8"/>
<dbReference type="KEGG" id="cpr:CPR_1899"/>
<dbReference type="Proteomes" id="UP000001824">
    <property type="component" value="Chromosome"/>
</dbReference>
<dbReference type="GO" id="GO:0005737">
    <property type="term" value="C:cytoplasm"/>
    <property type="evidence" value="ECO:0007669"/>
    <property type="project" value="UniProtKB-SubCell"/>
</dbReference>
<dbReference type="GO" id="GO:0004815">
    <property type="term" value="F:aspartate-tRNA ligase activity"/>
    <property type="evidence" value="ECO:0007669"/>
    <property type="project" value="UniProtKB-UniRule"/>
</dbReference>
<dbReference type="GO" id="GO:0005524">
    <property type="term" value="F:ATP binding"/>
    <property type="evidence" value="ECO:0007669"/>
    <property type="project" value="UniProtKB-UniRule"/>
</dbReference>
<dbReference type="GO" id="GO:0140096">
    <property type="term" value="F:catalytic activity, acting on a protein"/>
    <property type="evidence" value="ECO:0007669"/>
    <property type="project" value="UniProtKB-ARBA"/>
</dbReference>
<dbReference type="GO" id="GO:0003676">
    <property type="term" value="F:nucleic acid binding"/>
    <property type="evidence" value="ECO:0007669"/>
    <property type="project" value="InterPro"/>
</dbReference>
<dbReference type="GO" id="GO:0016740">
    <property type="term" value="F:transferase activity"/>
    <property type="evidence" value="ECO:0007669"/>
    <property type="project" value="UniProtKB-ARBA"/>
</dbReference>
<dbReference type="GO" id="GO:0006422">
    <property type="term" value="P:aspartyl-tRNA aminoacylation"/>
    <property type="evidence" value="ECO:0007669"/>
    <property type="project" value="UniProtKB-UniRule"/>
</dbReference>
<dbReference type="CDD" id="cd00777">
    <property type="entry name" value="AspRS_core"/>
    <property type="match status" value="1"/>
</dbReference>
<dbReference type="CDD" id="cd04317">
    <property type="entry name" value="EcAspRS_like_N"/>
    <property type="match status" value="1"/>
</dbReference>
<dbReference type="Gene3D" id="3.30.930.10">
    <property type="entry name" value="Bira Bifunctional Protein, Domain 2"/>
    <property type="match status" value="1"/>
</dbReference>
<dbReference type="Gene3D" id="3.30.1360.30">
    <property type="entry name" value="GAD-like domain"/>
    <property type="match status" value="1"/>
</dbReference>
<dbReference type="Gene3D" id="2.40.50.140">
    <property type="entry name" value="Nucleic acid-binding proteins"/>
    <property type="match status" value="1"/>
</dbReference>
<dbReference type="HAMAP" id="MF_00044">
    <property type="entry name" value="Asp_tRNA_synth_type1"/>
    <property type="match status" value="1"/>
</dbReference>
<dbReference type="InterPro" id="IPR004364">
    <property type="entry name" value="Aa-tRNA-synt_II"/>
</dbReference>
<dbReference type="InterPro" id="IPR006195">
    <property type="entry name" value="aa-tRNA-synth_II"/>
</dbReference>
<dbReference type="InterPro" id="IPR045864">
    <property type="entry name" value="aa-tRNA-synth_II/BPL/LPL"/>
</dbReference>
<dbReference type="InterPro" id="IPR004524">
    <property type="entry name" value="Asp-tRNA-ligase_1"/>
</dbReference>
<dbReference type="InterPro" id="IPR047089">
    <property type="entry name" value="Asp-tRNA-ligase_1_N"/>
</dbReference>
<dbReference type="InterPro" id="IPR002312">
    <property type="entry name" value="Asp/Asn-tRNA-synth_IIb"/>
</dbReference>
<dbReference type="InterPro" id="IPR047090">
    <property type="entry name" value="AspRS_core"/>
</dbReference>
<dbReference type="InterPro" id="IPR004115">
    <property type="entry name" value="GAD-like_sf"/>
</dbReference>
<dbReference type="InterPro" id="IPR029351">
    <property type="entry name" value="GAD_dom"/>
</dbReference>
<dbReference type="InterPro" id="IPR012340">
    <property type="entry name" value="NA-bd_OB-fold"/>
</dbReference>
<dbReference type="InterPro" id="IPR004365">
    <property type="entry name" value="NA-bd_OB_tRNA"/>
</dbReference>
<dbReference type="NCBIfam" id="TIGR00459">
    <property type="entry name" value="aspS_bact"/>
    <property type="match status" value="1"/>
</dbReference>
<dbReference type="NCBIfam" id="NF001750">
    <property type="entry name" value="PRK00476.1"/>
    <property type="match status" value="1"/>
</dbReference>
<dbReference type="PANTHER" id="PTHR22594:SF5">
    <property type="entry name" value="ASPARTATE--TRNA LIGASE, MITOCHONDRIAL"/>
    <property type="match status" value="1"/>
</dbReference>
<dbReference type="PANTHER" id="PTHR22594">
    <property type="entry name" value="ASPARTYL/LYSYL-TRNA SYNTHETASE"/>
    <property type="match status" value="1"/>
</dbReference>
<dbReference type="Pfam" id="PF02938">
    <property type="entry name" value="GAD"/>
    <property type="match status" value="1"/>
</dbReference>
<dbReference type="Pfam" id="PF00152">
    <property type="entry name" value="tRNA-synt_2"/>
    <property type="match status" value="1"/>
</dbReference>
<dbReference type="Pfam" id="PF01336">
    <property type="entry name" value="tRNA_anti-codon"/>
    <property type="match status" value="1"/>
</dbReference>
<dbReference type="PRINTS" id="PR01042">
    <property type="entry name" value="TRNASYNTHASP"/>
</dbReference>
<dbReference type="SUPFAM" id="SSF55681">
    <property type="entry name" value="Class II aaRS and biotin synthetases"/>
    <property type="match status" value="1"/>
</dbReference>
<dbReference type="SUPFAM" id="SSF55261">
    <property type="entry name" value="GAD domain-like"/>
    <property type="match status" value="1"/>
</dbReference>
<dbReference type="SUPFAM" id="SSF50249">
    <property type="entry name" value="Nucleic acid-binding proteins"/>
    <property type="match status" value="1"/>
</dbReference>
<dbReference type="PROSITE" id="PS50862">
    <property type="entry name" value="AA_TRNA_LIGASE_II"/>
    <property type="match status" value="1"/>
</dbReference>
<gene>
    <name evidence="1" type="primary">aspS</name>
    <name type="ordered locus">CPR_1899</name>
</gene>
<reference key="1">
    <citation type="journal article" date="2006" name="Genome Res.">
        <title>Skewed genomic variability in strains of the toxigenic bacterial pathogen, Clostridium perfringens.</title>
        <authorList>
            <person name="Myers G.S.A."/>
            <person name="Rasko D.A."/>
            <person name="Cheung J.K."/>
            <person name="Ravel J."/>
            <person name="Seshadri R."/>
            <person name="DeBoy R.T."/>
            <person name="Ren Q."/>
            <person name="Varga J."/>
            <person name="Awad M.M."/>
            <person name="Brinkac L.M."/>
            <person name="Daugherty S.C."/>
            <person name="Haft D.H."/>
            <person name="Dodson R.J."/>
            <person name="Madupu R."/>
            <person name="Nelson W.C."/>
            <person name="Rosovitz M.J."/>
            <person name="Sullivan S.A."/>
            <person name="Khouri H."/>
            <person name="Dimitrov G.I."/>
            <person name="Watkins K.L."/>
            <person name="Mulligan S."/>
            <person name="Benton J."/>
            <person name="Radune D."/>
            <person name="Fisher D.J."/>
            <person name="Atkins H.S."/>
            <person name="Hiscox T."/>
            <person name="Jost B.H."/>
            <person name="Billington S.J."/>
            <person name="Songer J.G."/>
            <person name="McClane B.A."/>
            <person name="Titball R.W."/>
            <person name="Rood J.I."/>
            <person name="Melville S.B."/>
            <person name="Paulsen I.T."/>
        </authorList>
    </citation>
    <scope>NUCLEOTIDE SEQUENCE [LARGE SCALE GENOMIC DNA]</scope>
    <source>
        <strain>SM101 / Type A</strain>
    </source>
</reference>
<keyword id="KW-0030">Aminoacyl-tRNA synthetase</keyword>
<keyword id="KW-0067">ATP-binding</keyword>
<keyword id="KW-0963">Cytoplasm</keyword>
<keyword id="KW-0436">Ligase</keyword>
<keyword id="KW-0547">Nucleotide-binding</keyword>
<keyword id="KW-0648">Protein biosynthesis</keyword>
<evidence type="ECO:0000255" key="1">
    <source>
        <dbReference type="HAMAP-Rule" id="MF_00044"/>
    </source>
</evidence>
<proteinExistence type="inferred from homology"/>
<comment type="function">
    <text evidence="1">Catalyzes the attachment of L-aspartate to tRNA(Asp) in a two-step reaction: L-aspartate is first activated by ATP to form Asp-AMP and then transferred to the acceptor end of tRNA(Asp).</text>
</comment>
<comment type="catalytic activity">
    <reaction evidence="1">
        <text>tRNA(Asp) + L-aspartate + ATP = L-aspartyl-tRNA(Asp) + AMP + diphosphate</text>
        <dbReference type="Rhea" id="RHEA:19649"/>
        <dbReference type="Rhea" id="RHEA-COMP:9660"/>
        <dbReference type="Rhea" id="RHEA-COMP:9678"/>
        <dbReference type="ChEBI" id="CHEBI:29991"/>
        <dbReference type="ChEBI" id="CHEBI:30616"/>
        <dbReference type="ChEBI" id="CHEBI:33019"/>
        <dbReference type="ChEBI" id="CHEBI:78442"/>
        <dbReference type="ChEBI" id="CHEBI:78516"/>
        <dbReference type="ChEBI" id="CHEBI:456215"/>
        <dbReference type="EC" id="6.1.1.12"/>
    </reaction>
</comment>
<comment type="subunit">
    <text evidence="1">Homodimer.</text>
</comment>
<comment type="subcellular location">
    <subcellularLocation>
        <location evidence="1">Cytoplasm</location>
    </subcellularLocation>
</comment>
<comment type="similarity">
    <text evidence="1">Belongs to the class-II aminoacyl-tRNA synthetase family. Type 1 subfamily.</text>
</comment>
<protein>
    <recommendedName>
        <fullName evidence="1">Aspartate--tRNA ligase</fullName>
        <ecNumber evidence="1">6.1.1.12</ecNumber>
    </recommendedName>
    <alternativeName>
        <fullName evidence="1">Aspartyl-tRNA synthetase</fullName>
        <shortName evidence="1">AspRS</shortName>
    </alternativeName>
</protein>
<sequence>MGEALNGLKRNIMCGDARESHIGQKVTVMGWVQRNRNLGGLQFIDLRDREGILQVVFNDDLGEEILEKAKSIRPEYCIAVTGEIVKRESVNPNMPTGMVELKAEELKILSESDTPPIYIKEDLDAAESIRLKYRYLDLRRPDMQNIFKIRHKTTKAIRDYLDQNGFLEMETPILTKSTPEGARDYLVPSRNYPGMFYALPQSPQLFKQLLMVSGFDRYFQIVKCFRDEDLRANRQPEFTQVDLEMSFVEQDDVMALNECLIKHVFKEVLGVDVKTPIKRMTFKDAMEKYGSDKPDLRFGMEITNLSDVVKECGFKVFTDAVANGGSVRGLCLEGGASMGRKDIDRLGEFVKTFKAKGLAWIQLKEEGVKSPIAKFFSEEELNKIIETMGAKTGDLILIVADKNSVVLKALGELRLELSRKFDLVKDKSEFNFTWITEFDLLEYDEEEGRYFAAHHPFTMPMDEDIKYLDTDPGRVRAKAYDLVLNGEELGGGSIRIHDTKLQEKMFEVLGFTQESAWERFGFLLEAFKFGPPPHGGLAFGLDRMIMFLAGTENIKDVITFPKNQNAFCYLTEAPNIVDEEQLKELGIETIKKEDTAE</sequence>
<organism>
    <name type="scientific">Clostridium perfringens (strain SM101 / Type A)</name>
    <dbReference type="NCBI Taxonomy" id="289380"/>
    <lineage>
        <taxon>Bacteria</taxon>
        <taxon>Bacillati</taxon>
        <taxon>Bacillota</taxon>
        <taxon>Clostridia</taxon>
        <taxon>Eubacteriales</taxon>
        <taxon>Clostridiaceae</taxon>
        <taxon>Clostridium</taxon>
    </lineage>
</organism>
<name>SYD_CLOPS</name>